<organism>
    <name type="scientific">Escherichia coli</name>
    <dbReference type="NCBI Taxonomy" id="562"/>
    <lineage>
        <taxon>Bacteria</taxon>
        <taxon>Pseudomonadati</taxon>
        <taxon>Pseudomonadota</taxon>
        <taxon>Gammaproteobacteria</taxon>
        <taxon>Enterobacterales</taxon>
        <taxon>Enterobacteriaceae</taxon>
        <taxon>Escherichia</taxon>
    </lineage>
</organism>
<geneLocation type="plasmid">
    <name>IncFII R100-1</name>
</geneLocation>
<feature type="propeptide" id="PRO_0000024492" description="Leader peptide; cleaved by LepB" evidence="1">
    <location>
        <begin position="1"/>
        <end position="51"/>
    </location>
</feature>
<feature type="chain" id="PRO_0000024493" description="Pilin">
    <location>
        <begin position="52"/>
        <end position="119"/>
    </location>
</feature>
<feature type="topological domain" description="Periplasmic" evidence="1">
    <location>
        <begin position="1"/>
        <end position="73"/>
    </location>
</feature>
<feature type="transmembrane region" description="Helical" evidence="2">
    <location>
        <begin position="74"/>
        <end position="94"/>
    </location>
</feature>
<feature type="topological domain" description="Cytoplasmic" evidence="1">
    <location>
        <begin position="95"/>
        <end position="98"/>
    </location>
</feature>
<feature type="transmembrane region" description="Helical" evidence="2">
    <location>
        <begin position="99"/>
        <end position="119"/>
    </location>
</feature>
<feature type="modified residue" description="N-acetylalanine" evidence="1">
    <location>
        <position position="52"/>
    </location>
</feature>
<name>PIL5_ECOLX</name>
<comment type="function">
    <text evidence="1">Propilin is the precursor of the pilus subunit, pilin, that forms conjugative pili, the filamentous surface appendages required for cell-to-cell contact during the earlier stages of bacterial conjugation, and that retract after contact is established. Mature pilin is assembled with the help of TraQ and TraX (By similarity).</text>
</comment>
<comment type="subunit">
    <text evidence="1">Monomer. Interacts with itself to form filaments; also interacts with TraQ (By similarity).</text>
</comment>
<comment type="subcellular location">
    <subcellularLocation>
        <location>Cell inner membrane</location>
        <topology>Multi-pass membrane protein</topology>
    </subcellularLocation>
    <subcellularLocation>
        <location evidence="1">Secreted</location>
    </subcellularLocation>
    <text evidence="1">Propilin is directed to the inner membrane, where it is cleaved and acetylated. Mature pilin forms filaments that are secreted to form the conjugative pilus (By similarity).</text>
</comment>
<comment type="similarity">
    <text evidence="3">Belongs to the TraA family.</text>
</comment>
<dbReference type="EMBL" id="K03090">
    <property type="protein sequence ID" value="AAA92754.1"/>
    <property type="molecule type" value="Genomic_DNA"/>
</dbReference>
<dbReference type="EMBL" id="M20941">
    <property type="protein sequence ID" value="AAA26074.1"/>
    <property type="molecule type" value="Genomic_DNA"/>
</dbReference>
<dbReference type="PIR" id="D23106">
    <property type="entry name" value="YQECR1"/>
</dbReference>
<dbReference type="RefSeq" id="NP_957600.1">
    <property type="nucleotide sequence ID" value="NC_005327.1"/>
</dbReference>
<dbReference type="RefSeq" id="WP_001098992.1">
    <property type="nucleotide sequence ID" value="NZ_WVVN01000094.1"/>
</dbReference>
<dbReference type="RefSeq" id="YP_001096468.1">
    <property type="nucleotide sequence ID" value="NC_009133.1"/>
</dbReference>
<dbReference type="RefSeq" id="YP_002456188.1">
    <property type="nucleotide sequence ID" value="NC_011812.1"/>
</dbReference>
<dbReference type="RefSeq" id="YP_003108228.1">
    <property type="nucleotide sequence ID" value="NC_013121.1"/>
</dbReference>
<dbReference type="RefSeq" id="YP_006952238.1">
    <property type="nucleotide sequence ID" value="NC_019057.1"/>
</dbReference>
<dbReference type="RefSeq" id="YP_006953322.1">
    <property type="nucleotide sequence ID" value="NC_019071.1"/>
</dbReference>
<dbReference type="RefSeq" id="YP_006953421.1">
    <property type="nucleotide sequence ID" value="NC_019072.1"/>
</dbReference>
<dbReference type="RefSeq" id="YP_006953948.1">
    <property type="nucleotide sequence ID" value="NC_019090.1"/>
</dbReference>
<dbReference type="RefSeq" id="YP_006954269.1">
    <property type="nucleotide sequence ID" value="NC_019095.1"/>
</dbReference>
<dbReference type="RefSeq" id="YP_006990760.1">
    <property type="nucleotide sequence ID" value="NC_019424.1"/>
</dbReference>
<dbReference type="RefSeq" id="YP_007447546.1">
    <property type="nucleotide sequence ID" value="NC_020278.2"/>
</dbReference>
<dbReference type="SMR" id="P14494"/>
<dbReference type="GO" id="GO:0005576">
    <property type="term" value="C:extracellular region"/>
    <property type="evidence" value="ECO:0007669"/>
    <property type="project" value="UniProtKB-SubCell"/>
</dbReference>
<dbReference type="GO" id="GO:0005886">
    <property type="term" value="C:plasma membrane"/>
    <property type="evidence" value="ECO:0007669"/>
    <property type="project" value="UniProtKB-SubCell"/>
</dbReference>
<dbReference type="InterPro" id="IPR008873">
    <property type="entry name" value="TraA"/>
</dbReference>
<dbReference type="NCBIfam" id="NF010294">
    <property type="entry name" value="PRK13734.1"/>
    <property type="match status" value="1"/>
</dbReference>
<dbReference type="NCBIfam" id="TIGR02758">
    <property type="entry name" value="TraA_TIGR"/>
    <property type="match status" value="1"/>
</dbReference>
<dbReference type="Pfam" id="PF05513">
    <property type="entry name" value="TraA"/>
    <property type="match status" value="1"/>
</dbReference>
<gene>
    <name type="primary">traA</name>
</gene>
<accession>P14494</accession>
<evidence type="ECO:0000250" key="1"/>
<evidence type="ECO:0000255" key="2"/>
<evidence type="ECO:0000305" key="3"/>
<proteinExistence type="inferred from homology"/>
<protein>
    <recommendedName>
        <fullName>Pilin</fullName>
    </recommendedName>
</protein>
<sequence>MNTVLSVQGASAPVEKKSFFSKFTRLNMLRLVRAVIPVAVLMMLFPELAMAAGKGDLMAKGNDTVKATFGKDSSIVKWVVLAEVLVGAVMYMMTKNVKFLVGFAIISVFIAVGMSVVGL</sequence>
<keyword id="KW-0007">Acetylation</keyword>
<keyword id="KW-0997">Cell inner membrane</keyword>
<keyword id="KW-1003">Cell membrane</keyword>
<keyword id="KW-0184">Conjugation</keyword>
<keyword id="KW-0472">Membrane</keyword>
<keyword id="KW-0614">Plasmid</keyword>
<keyword id="KW-0964">Secreted</keyword>
<keyword id="KW-0812">Transmembrane</keyword>
<keyword id="KW-1133">Transmembrane helix</keyword>
<reference key="1">
    <citation type="journal article" date="1985" name="J. Bacteriol.">
        <title>Characterization and sequence analysis of pilin from F-like plasmids.</title>
        <authorList>
            <person name="Frost L.S."/>
            <person name="Finlay B.B."/>
            <person name="Opgenorth A."/>
            <person name="Paranchych W."/>
            <person name="Lee J.S."/>
        </authorList>
    </citation>
    <scope>NUCLEOTIDE SEQUENCE [GENOMIC DNA]</scope>
</reference>
<reference key="2">
    <citation type="journal article" date="1988" name="J. Bacteriol.">
        <title>Identification and characterization of the products from the traJ and traY genes of plasmid R100.</title>
        <authorList>
            <person name="Inamoto S."/>
            <person name="Yoshioka Y."/>
            <person name="Ohtsubo E."/>
        </authorList>
    </citation>
    <scope>NUCLEOTIDE SEQUENCE [GENOMIC DNA] OF 1-7</scope>
</reference>